<reference key="1">
    <citation type="book" date="2006" name="Gram positive pathogens, 2nd edition">
        <title>The Staphylococcus aureus NCTC 8325 genome.</title>
        <editorList>
            <person name="Fischetti V."/>
            <person name="Novick R."/>
            <person name="Ferretti J."/>
            <person name="Portnoy D."/>
            <person name="Rood J."/>
        </editorList>
        <authorList>
            <person name="Gillaspy A.F."/>
            <person name="Worrell V."/>
            <person name="Orvis J."/>
            <person name="Roe B.A."/>
            <person name="Dyer D.W."/>
            <person name="Iandolo J.J."/>
        </authorList>
    </citation>
    <scope>NUCLEOTIDE SEQUENCE [LARGE SCALE GENOMIC DNA]</scope>
    <source>
        <strain>NCTC 8325 / PS 47</strain>
    </source>
</reference>
<protein>
    <recommendedName>
        <fullName evidence="1">UPF0354 protein SAOUHSC_01859</fullName>
    </recommendedName>
</protein>
<evidence type="ECO:0000255" key="1">
    <source>
        <dbReference type="HAMAP-Rule" id="MF_01548"/>
    </source>
</evidence>
<feature type="chain" id="PRO_0000300610" description="UPF0354 protein SAOUHSC_01859">
    <location>
        <begin position="1"/>
        <end position="285"/>
    </location>
</feature>
<gene>
    <name type="ordered locus">SAOUHSC_01859</name>
</gene>
<organism>
    <name type="scientific">Staphylococcus aureus (strain NCTC 8325 / PS 47)</name>
    <dbReference type="NCBI Taxonomy" id="93061"/>
    <lineage>
        <taxon>Bacteria</taxon>
        <taxon>Bacillati</taxon>
        <taxon>Bacillota</taxon>
        <taxon>Bacilli</taxon>
        <taxon>Bacillales</taxon>
        <taxon>Staphylococcaceae</taxon>
        <taxon>Staphylococcus</taxon>
    </lineage>
</organism>
<sequence>MNTFQMRDKLKERLSHLDVDFKFNREEETLRIYRTDNNKGITIKLNAIVAKYEDKKEKIVDEIVYYVDEAIAQMADKTLESISSSQIMPVIRATSFDKKTKQGVPFIYDEHTAETAVYYAVDLGKSYRLIDESMLEDLKLTEQQIREMSLFNVRKLSNSYTTDEVKGNIFYFINSNDGYDASRILNTAFLNEIEAQCQGEMLVAVPHQDVLIIADIRNKTGYDVMAHLTMEFFTKGLVPITSLSFGYKQGHLEPIFILGKNNKQKRDPNVIQRLEANRRKFNKDK</sequence>
<comment type="similarity">
    <text evidence="1">Belongs to the UPF0354 family.</text>
</comment>
<name>Y1859_STAA8</name>
<accession>Q2FXI7</accession>
<keyword id="KW-1185">Reference proteome</keyword>
<dbReference type="EMBL" id="CP000253">
    <property type="protein sequence ID" value="ABD30925.1"/>
    <property type="molecule type" value="Genomic_DNA"/>
</dbReference>
<dbReference type="RefSeq" id="WP_001091387.1">
    <property type="nucleotide sequence ID" value="NZ_LS483365.1"/>
</dbReference>
<dbReference type="RefSeq" id="YP_500363.1">
    <property type="nucleotide sequence ID" value="NC_007795.1"/>
</dbReference>
<dbReference type="STRING" id="93061.SAOUHSC_01859"/>
<dbReference type="PaxDb" id="1280-SAXN108_1773"/>
<dbReference type="GeneID" id="3920537"/>
<dbReference type="KEGG" id="sao:SAOUHSC_01859"/>
<dbReference type="PATRIC" id="fig|93061.5.peg.1692"/>
<dbReference type="eggNOG" id="COG4848">
    <property type="taxonomic scope" value="Bacteria"/>
</dbReference>
<dbReference type="HOGENOM" id="CLU_085634_0_0_9"/>
<dbReference type="OrthoDB" id="154553at2"/>
<dbReference type="PRO" id="PR:Q2FXI7"/>
<dbReference type="Proteomes" id="UP000008816">
    <property type="component" value="Chromosome"/>
</dbReference>
<dbReference type="HAMAP" id="MF_01548">
    <property type="entry name" value="UPF0354"/>
    <property type="match status" value="1"/>
</dbReference>
<dbReference type="InterPro" id="IPR010838">
    <property type="entry name" value="DUF1444"/>
</dbReference>
<dbReference type="NCBIfam" id="NF010189">
    <property type="entry name" value="PRK13668.1"/>
    <property type="match status" value="1"/>
</dbReference>
<dbReference type="Pfam" id="PF07285">
    <property type="entry name" value="DUF1444"/>
    <property type="match status" value="1"/>
</dbReference>
<dbReference type="PIRSF" id="PIRSF012562">
    <property type="entry name" value="UCP012562"/>
    <property type="match status" value="1"/>
</dbReference>
<proteinExistence type="inferred from homology"/>